<proteinExistence type="inferred from homology"/>
<accession>Q4UQV0</accession>
<gene>
    <name evidence="1" type="primary">kdpC</name>
    <name type="ordered locus">XC_3530</name>
</gene>
<comment type="function">
    <text evidence="1">Part of the high-affinity ATP-driven potassium transport (or Kdp) system, which catalyzes the hydrolysis of ATP coupled with the electrogenic transport of potassium into the cytoplasm. This subunit acts as a catalytic chaperone that increases the ATP-binding affinity of the ATP-hydrolyzing subunit KdpB by the formation of a transient KdpB/KdpC/ATP ternary complex.</text>
</comment>
<comment type="subunit">
    <text evidence="1">The system is composed of three essential subunits: KdpA, KdpB and KdpC.</text>
</comment>
<comment type="subcellular location">
    <subcellularLocation>
        <location evidence="1">Cell inner membrane</location>
        <topology evidence="1">Single-pass membrane protein</topology>
    </subcellularLocation>
</comment>
<comment type="similarity">
    <text evidence="1">Belongs to the KdpC family.</text>
</comment>
<keyword id="KW-0067">ATP-binding</keyword>
<keyword id="KW-0997">Cell inner membrane</keyword>
<keyword id="KW-1003">Cell membrane</keyword>
<keyword id="KW-0406">Ion transport</keyword>
<keyword id="KW-0472">Membrane</keyword>
<keyword id="KW-0547">Nucleotide-binding</keyword>
<keyword id="KW-0630">Potassium</keyword>
<keyword id="KW-0633">Potassium transport</keyword>
<keyword id="KW-0812">Transmembrane</keyword>
<keyword id="KW-1133">Transmembrane helix</keyword>
<keyword id="KW-0813">Transport</keyword>
<protein>
    <recommendedName>
        <fullName evidence="1">Potassium-transporting ATPase KdpC subunit</fullName>
    </recommendedName>
    <alternativeName>
        <fullName evidence="1">ATP phosphohydrolase [potassium-transporting] C chain</fullName>
    </alternativeName>
    <alternativeName>
        <fullName evidence="1">Potassium-binding and translocating subunit C</fullName>
    </alternativeName>
    <alternativeName>
        <fullName evidence="1">Potassium-translocating ATPase C chain</fullName>
    </alternativeName>
</protein>
<dbReference type="EMBL" id="CP000050">
    <property type="protein sequence ID" value="AAY50573.1"/>
    <property type="molecule type" value="Genomic_DNA"/>
</dbReference>
<dbReference type="RefSeq" id="WP_011035943.1">
    <property type="nucleotide sequence ID" value="NZ_CP155948.1"/>
</dbReference>
<dbReference type="SMR" id="Q4UQV0"/>
<dbReference type="KEGG" id="xcb:XC_3530"/>
<dbReference type="HOGENOM" id="CLU_077094_2_0_6"/>
<dbReference type="Proteomes" id="UP000000420">
    <property type="component" value="Chromosome"/>
</dbReference>
<dbReference type="GO" id="GO:0005886">
    <property type="term" value="C:plasma membrane"/>
    <property type="evidence" value="ECO:0007669"/>
    <property type="project" value="UniProtKB-SubCell"/>
</dbReference>
<dbReference type="GO" id="GO:0005524">
    <property type="term" value="F:ATP binding"/>
    <property type="evidence" value="ECO:0007669"/>
    <property type="project" value="UniProtKB-UniRule"/>
</dbReference>
<dbReference type="GO" id="GO:0008556">
    <property type="term" value="F:P-type potassium transmembrane transporter activity"/>
    <property type="evidence" value="ECO:0007669"/>
    <property type="project" value="InterPro"/>
</dbReference>
<dbReference type="HAMAP" id="MF_00276">
    <property type="entry name" value="KdpC"/>
    <property type="match status" value="1"/>
</dbReference>
<dbReference type="InterPro" id="IPR003820">
    <property type="entry name" value="KdpC"/>
</dbReference>
<dbReference type="NCBIfam" id="TIGR00681">
    <property type="entry name" value="kdpC"/>
    <property type="match status" value="1"/>
</dbReference>
<dbReference type="NCBIfam" id="NF001454">
    <property type="entry name" value="PRK00315.1"/>
    <property type="match status" value="1"/>
</dbReference>
<dbReference type="PANTHER" id="PTHR30042">
    <property type="entry name" value="POTASSIUM-TRANSPORTING ATPASE C CHAIN"/>
    <property type="match status" value="1"/>
</dbReference>
<dbReference type="PANTHER" id="PTHR30042:SF2">
    <property type="entry name" value="POTASSIUM-TRANSPORTING ATPASE KDPC SUBUNIT"/>
    <property type="match status" value="1"/>
</dbReference>
<dbReference type="Pfam" id="PF02669">
    <property type="entry name" value="KdpC"/>
    <property type="match status" value="1"/>
</dbReference>
<dbReference type="PIRSF" id="PIRSF001296">
    <property type="entry name" value="K_ATPase_KdpC"/>
    <property type="match status" value="1"/>
</dbReference>
<organism>
    <name type="scientific">Xanthomonas campestris pv. campestris (strain 8004)</name>
    <dbReference type="NCBI Taxonomy" id="314565"/>
    <lineage>
        <taxon>Bacteria</taxon>
        <taxon>Pseudomonadati</taxon>
        <taxon>Pseudomonadota</taxon>
        <taxon>Gammaproteobacteria</taxon>
        <taxon>Lysobacterales</taxon>
        <taxon>Lysobacteraceae</taxon>
        <taxon>Xanthomonas</taxon>
    </lineage>
</organism>
<sequence length="209" mass="21691">MSTSLPLRDDGAVRASFALALFVLLGLGLGYSLVATGITSALMPDQAHGSLLRADGRVIGSSLVAQPFADARYFQPRPSAAKYDPTAAAGSNQARSNPELLARIATARAEIAQRDGIAPDAVPGELLTQSGSGLDPHLSPAGAQVQLRRVAAARGWPEQRVAALLQAATEQPQFGLLGQPRINVLALNLALDRAGDGVPGTENGVEQQR</sequence>
<evidence type="ECO:0000255" key="1">
    <source>
        <dbReference type="HAMAP-Rule" id="MF_00276"/>
    </source>
</evidence>
<feature type="chain" id="PRO_1000022323" description="Potassium-transporting ATPase KdpC subunit">
    <location>
        <begin position="1"/>
        <end position="209"/>
    </location>
</feature>
<feature type="transmembrane region" description="Helical" evidence="1">
    <location>
        <begin position="18"/>
        <end position="38"/>
    </location>
</feature>
<reference key="1">
    <citation type="journal article" date="2005" name="Genome Res.">
        <title>Comparative and functional genomic analyses of the pathogenicity of phytopathogen Xanthomonas campestris pv. campestris.</title>
        <authorList>
            <person name="Qian W."/>
            <person name="Jia Y."/>
            <person name="Ren S.-X."/>
            <person name="He Y.-Q."/>
            <person name="Feng J.-X."/>
            <person name="Lu L.-F."/>
            <person name="Sun Q."/>
            <person name="Ying G."/>
            <person name="Tang D.-J."/>
            <person name="Tang H."/>
            <person name="Wu W."/>
            <person name="Hao P."/>
            <person name="Wang L."/>
            <person name="Jiang B.-L."/>
            <person name="Zeng S."/>
            <person name="Gu W.-Y."/>
            <person name="Lu G."/>
            <person name="Rong L."/>
            <person name="Tian Y."/>
            <person name="Yao Z."/>
            <person name="Fu G."/>
            <person name="Chen B."/>
            <person name="Fang R."/>
            <person name="Qiang B."/>
            <person name="Chen Z."/>
            <person name="Zhao G.-P."/>
            <person name="Tang J.-L."/>
            <person name="He C."/>
        </authorList>
    </citation>
    <scope>NUCLEOTIDE SEQUENCE [LARGE SCALE GENOMIC DNA]</scope>
    <source>
        <strain>8004</strain>
    </source>
</reference>
<name>KDPC_XANC8</name>